<evidence type="ECO:0000255" key="1">
    <source>
        <dbReference type="HAMAP-Rule" id="MF_00046"/>
    </source>
</evidence>
<name>MURC_SHEFN</name>
<accession>Q07WI6</accession>
<dbReference type="EC" id="6.3.2.8" evidence="1"/>
<dbReference type="EMBL" id="CP000447">
    <property type="protein sequence ID" value="ABI73628.1"/>
    <property type="molecule type" value="Genomic_DNA"/>
</dbReference>
<dbReference type="RefSeq" id="WP_011639213.1">
    <property type="nucleotide sequence ID" value="NC_008345.1"/>
</dbReference>
<dbReference type="SMR" id="Q07WI6"/>
<dbReference type="STRING" id="318167.Sfri_3803"/>
<dbReference type="KEGG" id="sfr:Sfri_3803"/>
<dbReference type="eggNOG" id="COG0773">
    <property type="taxonomic scope" value="Bacteria"/>
</dbReference>
<dbReference type="HOGENOM" id="CLU_028104_2_2_6"/>
<dbReference type="OrthoDB" id="9804126at2"/>
<dbReference type="UniPathway" id="UPA00219"/>
<dbReference type="Proteomes" id="UP000000684">
    <property type="component" value="Chromosome"/>
</dbReference>
<dbReference type="GO" id="GO:0005737">
    <property type="term" value="C:cytoplasm"/>
    <property type="evidence" value="ECO:0007669"/>
    <property type="project" value="UniProtKB-SubCell"/>
</dbReference>
<dbReference type="GO" id="GO:0005524">
    <property type="term" value="F:ATP binding"/>
    <property type="evidence" value="ECO:0007669"/>
    <property type="project" value="UniProtKB-UniRule"/>
</dbReference>
<dbReference type="GO" id="GO:0008763">
    <property type="term" value="F:UDP-N-acetylmuramate-L-alanine ligase activity"/>
    <property type="evidence" value="ECO:0007669"/>
    <property type="project" value="UniProtKB-UniRule"/>
</dbReference>
<dbReference type="GO" id="GO:0051301">
    <property type="term" value="P:cell division"/>
    <property type="evidence" value="ECO:0007669"/>
    <property type="project" value="UniProtKB-KW"/>
</dbReference>
<dbReference type="GO" id="GO:0071555">
    <property type="term" value="P:cell wall organization"/>
    <property type="evidence" value="ECO:0007669"/>
    <property type="project" value="UniProtKB-KW"/>
</dbReference>
<dbReference type="GO" id="GO:0009252">
    <property type="term" value="P:peptidoglycan biosynthetic process"/>
    <property type="evidence" value="ECO:0007669"/>
    <property type="project" value="UniProtKB-UniRule"/>
</dbReference>
<dbReference type="GO" id="GO:0008360">
    <property type="term" value="P:regulation of cell shape"/>
    <property type="evidence" value="ECO:0007669"/>
    <property type="project" value="UniProtKB-KW"/>
</dbReference>
<dbReference type="FunFam" id="3.40.1190.10:FF:000001">
    <property type="entry name" value="UDP-N-acetylmuramate--L-alanine ligase"/>
    <property type="match status" value="1"/>
</dbReference>
<dbReference type="FunFam" id="3.40.50.720:FF:000046">
    <property type="entry name" value="UDP-N-acetylmuramate--L-alanine ligase"/>
    <property type="match status" value="1"/>
</dbReference>
<dbReference type="Gene3D" id="3.90.190.20">
    <property type="entry name" value="Mur ligase, C-terminal domain"/>
    <property type="match status" value="1"/>
</dbReference>
<dbReference type="Gene3D" id="3.40.1190.10">
    <property type="entry name" value="Mur-like, catalytic domain"/>
    <property type="match status" value="1"/>
</dbReference>
<dbReference type="Gene3D" id="3.40.50.720">
    <property type="entry name" value="NAD(P)-binding Rossmann-like Domain"/>
    <property type="match status" value="1"/>
</dbReference>
<dbReference type="HAMAP" id="MF_00046">
    <property type="entry name" value="MurC"/>
    <property type="match status" value="1"/>
</dbReference>
<dbReference type="InterPro" id="IPR036565">
    <property type="entry name" value="Mur-like_cat_sf"/>
</dbReference>
<dbReference type="InterPro" id="IPR004101">
    <property type="entry name" value="Mur_ligase_C"/>
</dbReference>
<dbReference type="InterPro" id="IPR036615">
    <property type="entry name" value="Mur_ligase_C_dom_sf"/>
</dbReference>
<dbReference type="InterPro" id="IPR013221">
    <property type="entry name" value="Mur_ligase_cen"/>
</dbReference>
<dbReference type="InterPro" id="IPR000713">
    <property type="entry name" value="Mur_ligase_N"/>
</dbReference>
<dbReference type="InterPro" id="IPR050061">
    <property type="entry name" value="MurCDEF_pg_biosynth"/>
</dbReference>
<dbReference type="InterPro" id="IPR005758">
    <property type="entry name" value="UDP-N-AcMur_Ala_ligase_MurC"/>
</dbReference>
<dbReference type="NCBIfam" id="TIGR01082">
    <property type="entry name" value="murC"/>
    <property type="match status" value="1"/>
</dbReference>
<dbReference type="PANTHER" id="PTHR43445:SF3">
    <property type="entry name" value="UDP-N-ACETYLMURAMATE--L-ALANINE LIGASE"/>
    <property type="match status" value="1"/>
</dbReference>
<dbReference type="PANTHER" id="PTHR43445">
    <property type="entry name" value="UDP-N-ACETYLMURAMATE--L-ALANINE LIGASE-RELATED"/>
    <property type="match status" value="1"/>
</dbReference>
<dbReference type="Pfam" id="PF01225">
    <property type="entry name" value="Mur_ligase"/>
    <property type="match status" value="1"/>
</dbReference>
<dbReference type="Pfam" id="PF02875">
    <property type="entry name" value="Mur_ligase_C"/>
    <property type="match status" value="1"/>
</dbReference>
<dbReference type="Pfam" id="PF08245">
    <property type="entry name" value="Mur_ligase_M"/>
    <property type="match status" value="1"/>
</dbReference>
<dbReference type="SUPFAM" id="SSF51984">
    <property type="entry name" value="MurCD N-terminal domain"/>
    <property type="match status" value="1"/>
</dbReference>
<dbReference type="SUPFAM" id="SSF53623">
    <property type="entry name" value="MurD-like peptide ligases, catalytic domain"/>
    <property type="match status" value="1"/>
</dbReference>
<dbReference type="SUPFAM" id="SSF53244">
    <property type="entry name" value="MurD-like peptide ligases, peptide-binding domain"/>
    <property type="match status" value="1"/>
</dbReference>
<protein>
    <recommendedName>
        <fullName evidence="1">UDP-N-acetylmuramate--L-alanine ligase</fullName>
        <ecNumber evidence="1">6.3.2.8</ecNumber>
    </recommendedName>
    <alternativeName>
        <fullName evidence="1">UDP-N-acetylmuramoyl-L-alanine synthetase</fullName>
    </alternativeName>
</protein>
<reference key="1">
    <citation type="submission" date="2006-08" db="EMBL/GenBank/DDBJ databases">
        <title>Complete sequence of Shewanella frigidimarina NCIMB 400.</title>
        <authorList>
            <consortium name="US DOE Joint Genome Institute"/>
            <person name="Copeland A."/>
            <person name="Lucas S."/>
            <person name="Lapidus A."/>
            <person name="Barry K."/>
            <person name="Detter J.C."/>
            <person name="Glavina del Rio T."/>
            <person name="Hammon N."/>
            <person name="Israni S."/>
            <person name="Dalin E."/>
            <person name="Tice H."/>
            <person name="Pitluck S."/>
            <person name="Fredrickson J.K."/>
            <person name="Kolker E."/>
            <person name="McCuel L.A."/>
            <person name="DiChristina T."/>
            <person name="Nealson K.H."/>
            <person name="Newman D."/>
            <person name="Tiedje J.M."/>
            <person name="Zhou J."/>
            <person name="Romine M.F."/>
            <person name="Culley D.E."/>
            <person name="Serres M."/>
            <person name="Chertkov O."/>
            <person name="Brettin T."/>
            <person name="Bruce D."/>
            <person name="Han C."/>
            <person name="Tapia R."/>
            <person name="Gilna P."/>
            <person name="Schmutz J."/>
            <person name="Larimer F."/>
            <person name="Land M."/>
            <person name="Hauser L."/>
            <person name="Kyrpides N."/>
            <person name="Mikhailova N."/>
            <person name="Richardson P."/>
        </authorList>
    </citation>
    <scope>NUCLEOTIDE SEQUENCE [LARGE SCALE GENOMIC DNA]</scope>
    <source>
        <strain>NCIMB 400</strain>
    </source>
</reference>
<comment type="function">
    <text evidence="1">Cell wall formation.</text>
</comment>
<comment type="catalytic activity">
    <reaction evidence="1">
        <text>UDP-N-acetyl-alpha-D-muramate + L-alanine + ATP = UDP-N-acetyl-alpha-D-muramoyl-L-alanine + ADP + phosphate + H(+)</text>
        <dbReference type="Rhea" id="RHEA:23372"/>
        <dbReference type="ChEBI" id="CHEBI:15378"/>
        <dbReference type="ChEBI" id="CHEBI:30616"/>
        <dbReference type="ChEBI" id="CHEBI:43474"/>
        <dbReference type="ChEBI" id="CHEBI:57972"/>
        <dbReference type="ChEBI" id="CHEBI:70757"/>
        <dbReference type="ChEBI" id="CHEBI:83898"/>
        <dbReference type="ChEBI" id="CHEBI:456216"/>
        <dbReference type="EC" id="6.3.2.8"/>
    </reaction>
</comment>
<comment type="pathway">
    <text evidence="1">Cell wall biogenesis; peptidoglycan biosynthesis.</text>
</comment>
<comment type="subcellular location">
    <subcellularLocation>
        <location evidence="1">Cytoplasm</location>
    </subcellularLocation>
</comment>
<comment type="similarity">
    <text evidence="1">Belongs to the MurCDEF family.</text>
</comment>
<feature type="chain" id="PRO_1000004406" description="UDP-N-acetylmuramate--L-alanine ligase">
    <location>
        <begin position="1"/>
        <end position="485"/>
    </location>
</feature>
<feature type="binding site" evidence="1">
    <location>
        <begin position="127"/>
        <end position="133"/>
    </location>
    <ligand>
        <name>ATP</name>
        <dbReference type="ChEBI" id="CHEBI:30616"/>
    </ligand>
</feature>
<organism>
    <name type="scientific">Shewanella frigidimarina (strain NCIMB 400)</name>
    <dbReference type="NCBI Taxonomy" id="318167"/>
    <lineage>
        <taxon>Bacteria</taxon>
        <taxon>Pseudomonadati</taxon>
        <taxon>Pseudomonadota</taxon>
        <taxon>Gammaproteobacteria</taxon>
        <taxon>Alteromonadales</taxon>
        <taxon>Shewanellaceae</taxon>
        <taxon>Shewanella</taxon>
    </lineage>
</organism>
<keyword id="KW-0067">ATP-binding</keyword>
<keyword id="KW-0131">Cell cycle</keyword>
<keyword id="KW-0132">Cell division</keyword>
<keyword id="KW-0133">Cell shape</keyword>
<keyword id="KW-0961">Cell wall biogenesis/degradation</keyword>
<keyword id="KW-0963">Cytoplasm</keyword>
<keyword id="KW-0436">Ligase</keyword>
<keyword id="KW-0547">Nucleotide-binding</keyword>
<keyword id="KW-0573">Peptidoglycan synthesis</keyword>
<keyword id="KW-1185">Reference proteome</keyword>
<gene>
    <name evidence="1" type="primary">murC</name>
    <name type="ordered locus">Sfri_3803</name>
</gene>
<proteinExistence type="inferred from homology"/>
<sequence length="485" mass="52813">MTKTERYAQLRSMIPEMRRIKRIHFVGIGGAGMGGIAEVLVNEGYQISGSDIAINSVTERLASLGAKIIIGHQAQSVEQVDVVVVSTAINPQNPEIIAAKELRIPIVRRAEMLAELMRYRHGVAIAGTHGKTTTTSLIASVYGQADRDPTFVIGGLLNSAGTNARLGTSRYLIAEADESDASFLHLQPMVSVITNIEADHMDTYGGDFEKLKTTFVDFLHNLPFYGVAVMCIDDEVIREIMPRIGRQVVTYGFSEEADVQAINFAQNGHQSSFTVKRHGKDNVDIVLNLPGEHNVLNALAAIAVASEDDIDDSAIVQALAEFEGIGRRFQHLGEFETPNGSVMLVDDYGHHPSEVLATIKAARAGWPDKRLVMAYQPHRYSRTRDLYEDFVDVLSQVDCLLLLDVYAAGEAPIPGADGRALCRSIRLRGQIDPIFIASPDQLAAVLPDVLQHGDLFMTQGAGNIGALSKELAQSNLGCKVLVEEQ</sequence>